<proteinExistence type="inferred from homology"/>
<comment type="function">
    <text evidence="1">An essential GTPase which binds GTP, GDP and possibly (p)ppGpp with moderate affinity, with high nucleotide exchange rates and a fairly low GTP hydrolysis rate. Plays a role in control of the cell cycle, stress response, ribosome biogenesis and in those bacteria that undergo differentiation, in morphogenesis control.</text>
</comment>
<comment type="cofactor">
    <cofactor evidence="1">
        <name>Mg(2+)</name>
        <dbReference type="ChEBI" id="CHEBI:18420"/>
    </cofactor>
</comment>
<comment type="subunit">
    <text evidence="1">Monomer.</text>
</comment>
<comment type="subcellular location">
    <subcellularLocation>
        <location evidence="1">Cytoplasm</location>
    </subcellularLocation>
</comment>
<comment type="similarity">
    <text evidence="1">Belongs to the TRAFAC class OBG-HflX-like GTPase superfamily. OBG GTPase family.</text>
</comment>
<feature type="chain" id="PRO_0000385751" description="GTPase Obg">
    <location>
        <begin position="1"/>
        <end position="377"/>
    </location>
</feature>
<feature type="domain" description="Obg" evidence="2">
    <location>
        <begin position="1"/>
        <end position="159"/>
    </location>
</feature>
<feature type="domain" description="OBG-type G" evidence="1">
    <location>
        <begin position="160"/>
        <end position="336"/>
    </location>
</feature>
<feature type="region of interest" description="Disordered" evidence="3">
    <location>
        <begin position="127"/>
        <end position="148"/>
    </location>
</feature>
<feature type="region of interest" description="Disordered" evidence="3">
    <location>
        <begin position="339"/>
        <end position="377"/>
    </location>
</feature>
<feature type="binding site" evidence="1">
    <location>
        <begin position="166"/>
        <end position="173"/>
    </location>
    <ligand>
        <name>GTP</name>
        <dbReference type="ChEBI" id="CHEBI:37565"/>
    </ligand>
</feature>
<feature type="binding site" evidence="1">
    <location>
        <position position="173"/>
    </location>
    <ligand>
        <name>Mg(2+)</name>
        <dbReference type="ChEBI" id="CHEBI:18420"/>
    </ligand>
</feature>
<feature type="binding site" evidence="1">
    <location>
        <begin position="191"/>
        <end position="195"/>
    </location>
    <ligand>
        <name>GTP</name>
        <dbReference type="ChEBI" id="CHEBI:37565"/>
    </ligand>
</feature>
<feature type="binding site" evidence="1">
    <location>
        <position position="193"/>
    </location>
    <ligand>
        <name>Mg(2+)</name>
        <dbReference type="ChEBI" id="CHEBI:18420"/>
    </ligand>
</feature>
<feature type="binding site" evidence="1">
    <location>
        <begin position="213"/>
        <end position="216"/>
    </location>
    <ligand>
        <name>GTP</name>
        <dbReference type="ChEBI" id="CHEBI:37565"/>
    </ligand>
</feature>
<feature type="binding site" evidence="1">
    <location>
        <begin position="288"/>
        <end position="291"/>
    </location>
    <ligand>
        <name>GTP</name>
        <dbReference type="ChEBI" id="CHEBI:37565"/>
    </ligand>
</feature>
<feature type="binding site" evidence="1">
    <location>
        <begin position="317"/>
        <end position="319"/>
    </location>
    <ligand>
        <name>GTP</name>
        <dbReference type="ChEBI" id="CHEBI:37565"/>
    </ligand>
</feature>
<accession>Q7VZX6</accession>
<protein>
    <recommendedName>
        <fullName evidence="1">GTPase Obg</fullName>
        <ecNumber evidence="1">3.6.5.-</ecNumber>
    </recommendedName>
    <alternativeName>
        <fullName evidence="1">GTP-binding protein Obg</fullName>
    </alternativeName>
</protein>
<dbReference type="EC" id="3.6.5.-" evidence="1"/>
<dbReference type="EMBL" id="BX640413">
    <property type="protein sequence ID" value="CAE41053.1"/>
    <property type="molecule type" value="Genomic_DNA"/>
</dbReference>
<dbReference type="RefSeq" id="NP_879567.1">
    <property type="nucleotide sequence ID" value="NC_002929.2"/>
</dbReference>
<dbReference type="SMR" id="Q7VZX6"/>
<dbReference type="STRING" id="257313.BP0747"/>
<dbReference type="PaxDb" id="257313-BP0747"/>
<dbReference type="KEGG" id="bpe:BP0747"/>
<dbReference type="PATRIC" id="fig|257313.5.peg.799"/>
<dbReference type="eggNOG" id="COG0536">
    <property type="taxonomic scope" value="Bacteria"/>
</dbReference>
<dbReference type="HOGENOM" id="CLU_011747_2_0_4"/>
<dbReference type="Proteomes" id="UP000002676">
    <property type="component" value="Chromosome"/>
</dbReference>
<dbReference type="GO" id="GO:0005737">
    <property type="term" value="C:cytoplasm"/>
    <property type="evidence" value="ECO:0007669"/>
    <property type="project" value="UniProtKB-SubCell"/>
</dbReference>
<dbReference type="GO" id="GO:0005525">
    <property type="term" value="F:GTP binding"/>
    <property type="evidence" value="ECO:0007669"/>
    <property type="project" value="UniProtKB-UniRule"/>
</dbReference>
<dbReference type="GO" id="GO:0003924">
    <property type="term" value="F:GTPase activity"/>
    <property type="evidence" value="ECO:0007669"/>
    <property type="project" value="UniProtKB-UniRule"/>
</dbReference>
<dbReference type="GO" id="GO:0000287">
    <property type="term" value="F:magnesium ion binding"/>
    <property type="evidence" value="ECO:0007669"/>
    <property type="project" value="InterPro"/>
</dbReference>
<dbReference type="GO" id="GO:0042254">
    <property type="term" value="P:ribosome biogenesis"/>
    <property type="evidence" value="ECO:0007669"/>
    <property type="project" value="UniProtKB-UniRule"/>
</dbReference>
<dbReference type="CDD" id="cd01898">
    <property type="entry name" value="Obg"/>
    <property type="match status" value="1"/>
</dbReference>
<dbReference type="FunFam" id="2.70.210.12:FF:000001">
    <property type="entry name" value="GTPase Obg"/>
    <property type="match status" value="1"/>
</dbReference>
<dbReference type="Gene3D" id="2.70.210.12">
    <property type="entry name" value="GTP1/OBG domain"/>
    <property type="match status" value="1"/>
</dbReference>
<dbReference type="Gene3D" id="3.40.50.300">
    <property type="entry name" value="P-loop containing nucleotide triphosphate hydrolases"/>
    <property type="match status" value="1"/>
</dbReference>
<dbReference type="HAMAP" id="MF_01454">
    <property type="entry name" value="GTPase_Obg"/>
    <property type="match status" value="1"/>
</dbReference>
<dbReference type="InterPro" id="IPR031167">
    <property type="entry name" value="G_OBG"/>
</dbReference>
<dbReference type="InterPro" id="IPR006073">
    <property type="entry name" value="GTP-bd"/>
</dbReference>
<dbReference type="InterPro" id="IPR014100">
    <property type="entry name" value="GTP-bd_Obg/CgtA"/>
</dbReference>
<dbReference type="InterPro" id="IPR006074">
    <property type="entry name" value="GTP1-OBG_CS"/>
</dbReference>
<dbReference type="InterPro" id="IPR006169">
    <property type="entry name" value="GTP1_OBG_dom"/>
</dbReference>
<dbReference type="InterPro" id="IPR036726">
    <property type="entry name" value="GTP1_OBG_dom_sf"/>
</dbReference>
<dbReference type="InterPro" id="IPR045086">
    <property type="entry name" value="OBG_GTPase"/>
</dbReference>
<dbReference type="InterPro" id="IPR027417">
    <property type="entry name" value="P-loop_NTPase"/>
</dbReference>
<dbReference type="NCBIfam" id="TIGR02729">
    <property type="entry name" value="Obg_CgtA"/>
    <property type="match status" value="1"/>
</dbReference>
<dbReference type="NCBIfam" id="NF008955">
    <property type="entry name" value="PRK12297.1"/>
    <property type="match status" value="1"/>
</dbReference>
<dbReference type="NCBIfam" id="NF008956">
    <property type="entry name" value="PRK12299.1"/>
    <property type="match status" value="1"/>
</dbReference>
<dbReference type="PANTHER" id="PTHR11702">
    <property type="entry name" value="DEVELOPMENTALLY REGULATED GTP-BINDING PROTEIN-RELATED"/>
    <property type="match status" value="1"/>
</dbReference>
<dbReference type="PANTHER" id="PTHR11702:SF31">
    <property type="entry name" value="MITOCHONDRIAL RIBOSOME-ASSOCIATED GTPASE 2"/>
    <property type="match status" value="1"/>
</dbReference>
<dbReference type="Pfam" id="PF01018">
    <property type="entry name" value="GTP1_OBG"/>
    <property type="match status" value="1"/>
</dbReference>
<dbReference type="Pfam" id="PF01926">
    <property type="entry name" value="MMR_HSR1"/>
    <property type="match status" value="1"/>
</dbReference>
<dbReference type="PIRSF" id="PIRSF002401">
    <property type="entry name" value="GTP_bd_Obg/CgtA"/>
    <property type="match status" value="1"/>
</dbReference>
<dbReference type="PRINTS" id="PR00326">
    <property type="entry name" value="GTP1OBG"/>
</dbReference>
<dbReference type="SUPFAM" id="SSF82051">
    <property type="entry name" value="Obg GTP-binding protein N-terminal domain"/>
    <property type="match status" value="1"/>
</dbReference>
<dbReference type="SUPFAM" id="SSF52540">
    <property type="entry name" value="P-loop containing nucleoside triphosphate hydrolases"/>
    <property type="match status" value="1"/>
</dbReference>
<dbReference type="PROSITE" id="PS51710">
    <property type="entry name" value="G_OBG"/>
    <property type="match status" value="1"/>
</dbReference>
<dbReference type="PROSITE" id="PS00905">
    <property type="entry name" value="GTP1_OBG"/>
    <property type="match status" value="1"/>
</dbReference>
<dbReference type="PROSITE" id="PS51883">
    <property type="entry name" value="OBG"/>
    <property type="match status" value="1"/>
</dbReference>
<sequence>MKFVDEATIEVIAGKGGNGVASFRREKFIPKGGPDGGDGGRGGSIYAVADRNINTLIDFRYARLHRAKNGENGRGSDQYGAAAPDITLRVPVGTVVHDADTGEVLFDLDRHDQKVTLAAGGAGGMGNIHFKSSTNRAPRQWTPGKEGEQRRLRMELKVLADVGLLGLPNAGKSTLISRISNARPKIADYPFTTLHPNLGVVRTSPSRSFVVADIPGLIEGASEGAGLGHLFLRHLARTRVLLHLVDISSPDPEADPIEQAVVDANAIVEELRRYDPELAAKPRWLVLNKLDMVPDAQDAQQRFCAEFGWTGPVFAISGLNGEGTQDLIWALQDYLDAEKRKDQDAQDQADGTYVFEDPRFDASRGGAAPATPPGGDE</sequence>
<organism>
    <name type="scientific">Bordetella pertussis (strain Tohama I / ATCC BAA-589 / NCTC 13251)</name>
    <dbReference type="NCBI Taxonomy" id="257313"/>
    <lineage>
        <taxon>Bacteria</taxon>
        <taxon>Pseudomonadati</taxon>
        <taxon>Pseudomonadota</taxon>
        <taxon>Betaproteobacteria</taxon>
        <taxon>Burkholderiales</taxon>
        <taxon>Alcaligenaceae</taxon>
        <taxon>Bordetella</taxon>
    </lineage>
</organism>
<reference key="1">
    <citation type="journal article" date="2003" name="Nat. Genet.">
        <title>Comparative analysis of the genome sequences of Bordetella pertussis, Bordetella parapertussis and Bordetella bronchiseptica.</title>
        <authorList>
            <person name="Parkhill J."/>
            <person name="Sebaihia M."/>
            <person name="Preston A."/>
            <person name="Murphy L.D."/>
            <person name="Thomson N.R."/>
            <person name="Harris D.E."/>
            <person name="Holden M.T.G."/>
            <person name="Churcher C.M."/>
            <person name="Bentley S.D."/>
            <person name="Mungall K.L."/>
            <person name="Cerdeno-Tarraga A.-M."/>
            <person name="Temple L."/>
            <person name="James K.D."/>
            <person name="Harris B."/>
            <person name="Quail M.A."/>
            <person name="Achtman M."/>
            <person name="Atkin R."/>
            <person name="Baker S."/>
            <person name="Basham D."/>
            <person name="Bason N."/>
            <person name="Cherevach I."/>
            <person name="Chillingworth T."/>
            <person name="Collins M."/>
            <person name="Cronin A."/>
            <person name="Davis P."/>
            <person name="Doggett J."/>
            <person name="Feltwell T."/>
            <person name="Goble A."/>
            <person name="Hamlin N."/>
            <person name="Hauser H."/>
            <person name="Holroyd S."/>
            <person name="Jagels K."/>
            <person name="Leather S."/>
            <person name="Moule S."/>
            <person name="Norberczak H."/>
            <person name="O'Neil S."/>
            <person name="Ormond D."/>
            <person name="Price C."/>
            <person name="Rabbinowitsch E."/>
            <person name="Rutter S."/>
            <person name="Sanders M."/>
            <person name="Saunders D."/>
            <person name="Seeger K."/>
            <person name="Sharp S."/>
            <person name="Simmonds M."/>
            <person name="Skelton J."/>
            <person name="Squares R."/>
            <person name="Squares S."/>
            <person name="Stevens K."/>
            <person name="Unwin L."/>
            <person name="Whitehead S."/>
            <person name="Barrell B.G."/>
            <person name="Maskell D.J."/>
        </authorList>
    </citation>
    <scope>NUCLEOTIDE SEQUENCE [LARGE SCALE GENOMIC DNA]</scope>
    <source>
        <strain>Tohama I / ATCC BAA-589 / NCTC 13251</strain>
    </source>
</reference>
<gene>
    <name evidence="1" type="primary">obg</name>
    <name type="ordered locus">BP0747</name>
</gene>
<name>OBG_BORPE</name>
<keyword id="KW-0963">Cytoplasm</keyword>
<keyword id="KW-0342">GTP-binding</keyword>
<keyword id="KW-0378">Hydrolase</keyword>
<keyword id="KW-0460">Magnesium</keyword>
<keyword id="KW-0479">Metal-binding</keyword>
<keyword id="KW-0547">Nucleotide-binding</keyword>
<keyword id="KW-1185">Reference proteome</keyword>
<evidence type="ECO:0000255" key="1">
    <source>
        <dbReference type="HAMAP-Rule" id="MF_01454"/>
    </source>
</evidence>
<evidence type="ECO:0000255" key="2">
    <source>
        <dbReference type="PROSITE-ProRule" id="PRU01231"/>
    </source>
</evidence>
<evidence type="ECO:0000256" key="3">
    <source>
        <dbReference type="SAM" id="MobiDB-lite"/>
    </source>
</evidence>